<dbReference type="EC" id="2.7.11.33" evidence="1"/>
<dbReference type="EC" id="2.7.4.28" evidence="1"/>
<dbReference type="EMBL" id="AL157959">
    <property type="protein sequence ID" value="CAM08067.1"/>
    <property type="molecule type" value="Genomic_DNA"/>
</dbReference>
<dbReference type="PIR" id="H81927">
    <property type="entry name" value="H81927"/>
</dbReference>
<dbReference type="RefSeq" id="WP_002214270.1">
    <property type="nucleotide sequence ID" value="NC_003116.1"/>
</dbReference>
<dbReference type="SMR" id="Q9JVI4"/>
<dbReference type="EnsemblBacteria" id="CAM08067">
    <property type="protein sequence ID" value="CAM08067"/>
    <property type="gene ID" value="NMA0827"/>
</dbReference>
<dbReference type="KEGG" id="nma:NMA0827"/>
<dbReference type="HOGENOM" id="CLU_046206_1_0_4"/>
<dbReference type="Proteomes" id="UP000000626">
    <property type="component" value="Chromosome"/>
</dbReference>
<dbReference type="GO" id="GO:0043531">
    <property type="term" value="F:ADP binding"/>
    <property type="evidence" value="ECO:0007669"/>
    <property type="project" value="UniProtKB-UniRule"/>
</dbReference>
<dbReference type="GO" id="GO:0005524">
    <property type="term" value="F:ATP binding"/>
    <property type="evidence" value="ECO:0007669"/>
    <property type="project" value="InterPro"/>
</dbReference>
<dbReference type="GO" id="GO:0016776">
    <property type="term" value="F:phosphotransferase activity, phosphate group as acceptor"/>
    <property type="evidence" value="ECO:0007669"/>
    <property type="project" value="UniProtKB-UniRule"/>
</dbReference>
<dbReference type="GO" id="GO:0004674">
    <property type="term" value="F:protein serine/threonine kinase activity"/>
    <property type="evidence" value="ECO:0007669"/>
    <property type="project" value="UniProtKB-UniRule"/>
</dbReference>
<dbReference type="HAMAP" id="MF_01062">
    <property type="entry name" value="PSRP"/>
    <property type="match status" value="1"/>
</dbReference>
<dbReference type="InterPro" id="IPR005177">
    <property type="entry name" value="Kinase-pyrophosphorylase"/>
</dbReference>
<dbReference type="InterPro" id="IPR026530">
    <property type="entry name" value="PSRP"/>
</dbReference>
<dbReference type="NCBIfam" id="NF003742">
    <property type="entry name" value="PRK05339.1"/>
    <property type="match status" value="1"/>
</dbReference>
<dbReference type="PANTHER" id="PTHR31756">
    <property type="entry name" value="PYRUVATE, PHOSPHATE DIKINASE REGULATORY PROTEIN 1, CHLOROPLASTIC"/>
    <property type="match status" value="1"/>
</dbReference>
<dbReference type="PANTHER" id="PTHR31756:SF3">
    <property type="entry name" value="PYRUVATE, PHOSPHATE DIKINASE REGULATORY PROTEIN 1, CHLOROPLASTIC"/>
    <property type="match status" value="1"/>
</dbReference>
<dbReference type="Pfam" id="PF03618">
    <property type="entry name" value="Kinase-PPPase"/>
    <property type="match status" value="1"/>
</dbReference>
<keyword id="KW-0418">Kinase</keyword>
<keyword id="KW-0547">Nucleotide-binding</keyword>
<keyword id="KW-0723">Serine/threonine-protein kinase</keyword>
<keyword id="KW-0808">Transferase</keyword>
<evidence type="ECO:0000255" key="1">
    <source>
        <dbReference type="HAMAP-Rule" id="MF_01062"/>
    </source>
</evidence>
<name>PSRP_NEIMA</name>
<comment type="function">
    <text evidence="1">Bifunctional serine/threonine kinase and phosphorylase involved in the regulation of the phosphoenolpyruvate synthase (PEPS) by catalyzing its phosphorylation/dephosphorylation.</text>
</comment>
<comment type="catalytic activity">
    <reaction evidence="1">
        <text>[pyruvate, water dikinase] + ADP = [pyruvate, water dikinase]-phosphate + AMP + H(+)</text>
        <dbReference type="Rhea" id="RHEA:46020"/>
        <dbReference type="Rhea" id="RHEA-COMP:11425"/>
        <dbReference type="Rhea" id="RHEA-COMP:11426"/>
        <dbReference type="ChEBI" id="CHEBI:15378"/>
        <dbReference type="ChEBI" id="CHEBI:43176"/>
        <dbReference type="ChEBI" id="CHEBI:68546"/>
        <dbReference type="ChEBI" id="CHEBI:456215"/>
        <dbReference type="ChEBI" id="CHEBI:456216"/>
        <dbReference type="EC" id="2.7.11.33"/>
    </reaction>
</comment>
<comment type="catalytic activity">
    <reaction evidence="1">
        <text>[pyruvate, water dikinase]-phosphate + phosphate + H(+) = [pyruvate, water dikinase] + diphosphate</text>
        <dbReference type="Rhea" id="RHEA:48580"/>
        <dbReference type="Rhea" id="RHEA-COMP:11425"/>
        <dbReference type="Rhea" id="RHEA-COMP:11426"/>
        <dbReference type="ChEBI" id="CHEBI:15378"/>
        <dbReference type="ChEBI" id="CHEBI:33019"/>
        <dbReference type="ChEBI" id="CHEBI:43176"/>
        <dbReference type="ChEBI" id="CHEBI:43474"/>
        <dbReference type="ChEBI" id="CHEBI:68546"/>
        <dbReference type="EC" id="2.7.4.28"/>
    </reaction>
</comment>
<comment type="similarity">
    <text evidence="1">Belongs to the pyruvate, phosphate/water dikinase regulatory protein family. PSRP subfamily.</text>
</comment>
<reference key="1">
    <citation type="journal article" date="2000" name="Nature">
        <title>Complete DNA sequence of a serogroup A strain of Neisseria meningitidis Z2491.</title>
        <authorList>
            <person name="Parkhill J."/>
            <person name="Achtman M."/>
            <person name="James K.D."/>
            <person name="Bentley S.D."/>
            <person name="Churcher C.M."/>
            <person name="Klee S.R."/>
            <person name="Morelli G."/>
            <person name="Basham D."/>
            <person name="Brown D."/>
            <person name="Chillingworth T."/>
            <person name="Davies R.M."/>
            <person name="Davis P."/>
            <person name="Devlin K."/>
            <person name="Feltwell T."/>
            <person name="Hamlin N."/>
            <person name="Holroyd S."/>
            <person name="Jagels K."/>
            <person name="Leather S."/>
            <person name="Moule S."/>
            <person name="Mungall K.L."/>
            <person name="Quail M.A."/>
            <person name="Rajandream M.A."/>
            <person name="Rutherford K.M."/>
            <person name="Simmonds M."/>
            <person name="Skelton J."/>
            <person name="Whitehead S."/>
            <person name="Spratt B.G."/>
            <person name="Barrell B.G."/>
        </authorList>
    </citation>
    <scope>NUCLEOTIDE SEQUENCE [LARGE SCALE GENOMIC DNA]</scope>
    <source>
        <strain>DSM 15465 / Z2491</strain>
    </source>
</reference>
<proteinExistence type="inferred from homology"/>
<protein>
    <recommendedName>
        <fullName evidence="1">Putative phosphoenolpyruvate synthase regulatory protein</fullName>
        <shortName evidence="1">PEP synthase regulatory protein</shortName>
        <shortName evidence="1">PSRP</shortName>
        <ecNumber evidence="1">2.7.11.33</ecNumber>
        <ecNumber evidence="1">2.7.4.28</ecNumber>
    </recommendedName>
    <alternativeName>
        <fullName evidence="1">Pyruvate, water dikinase regulatory protein</fullName>
    </alternativeName>
</protein>
<gene>
    <name type="ordered locus">NMA0827</name>
</gene>
<feature type="chain" id="PRO_0000196678" description="Putative phosphoenolpyruvate synthase regulatory protein">
    <location>
        <begin position="1"/>
        <end position="273"/>
    </location>
</feature>
<feature type="binding site" evidence="1">
    <location>
        <begin position="154"/>
        <end position="161"/>
    </location>
    <ligand>
        <name>ADP</name>
        <dbReference type="ChEBI" id="CHEBI:456216"/>
    </ligand>
</feature>
<sequence>MSSPRHVFYISDRTGLTAENIGEALLNQFGNLSFKRHTHPFVDTPEKARAVVEKVNRSRQENGQRPIAFVSVVDDEIRRIIKGADAFQINFFETFLGLLEKELNTEATASEQGHHSIGNTKRYDARMEAVNFSLNHDDGVSDKNLQEADVILMGVSRSGKTPTCLYLALQYGIRAANYPLIPDDLESADLPRMVKPYRDKLFGLTIQPERLQAIRQERRPNSTYAKIDTCRSEVADAQSMFRRHGIPFANTTDKSVEELAVHILQACKLKRRF</sequence>
<accession>Q9JVI4</accession>
<accession>A1IQN3</accession>
<organism>
    <name type="scientific">Neisseria meningitidis serogroup A / serotype 4A (strain DSM 15465 / Z2491)</name>
    <dbReference type="NCBI Taxonomy" id="122587"/>
    <lineage>
        <taxon>Bacteria</taxon>
        <taxon>Pseudomonadati</taxon>
        <taxon>Pseudomonadota</taxon>
        <taxon>Betaproteobacteria</taxon>
        <taxon>Neisseriales</taxon>
        <taxon>Neisseriaceae</taxon>
        <taxon>Neisseria</taxon>
    </lineage>
</organism>